<proteinExistence type="predicted"/>
<reference key="1">
    <citation type="journal article" date="1994" name="Nucleic Acids Res.">
        <title>Analysis of the Escherichia coli genome. V. DNA sequence of the region from 76.0 to 81.5 minutes.</title>
        <authorList>
            <person name="Sofia H.J."/>
            <person name="Burland V."/>
            <person name="Daniels D.L."/>
            <person name="Plunkett G. III"/>
            <person name="Blattner F.R."/>
        </authorList>
    </citation>
    <scope>NUCLEOTIDE SEQUENCE [LARGE SCALE GENOMIC DNA]</scope>
    <source>
        <strain>K12 / MG1655 / ATCC 47076</strain>
    </source>
</reference>
<reference key="2">
    <citation type="journal article" date="1997" name="Science">
        <title>The complete genome sequence of Escherichia coli K-12.</title>
        <authorList>
            <person name="Blattner F.R."/>
            <person name="Plunkett G. III"/>
            <person name="Bloch C.A."/>
            <person name="Perna N.T."/>
            <person name="Burland V."/>
            <person name="Riley M."/>
            <person name="Collado-Vides J."/>
            <person name="Glasner J.D."/>
            <person name="Rode C.K."/>
            <person name="Mayhew G.F."/>
            <person name="Gregor J."/>
            <person name="Davis N.W."/>
            <person name="Kirkpatrick H.A."/>
            <person name="Goeden M.A."/>
            <person name="Rose D.J."/>
            <person name="Mau B."/>
            <person name="Shao Y."/>
        </authorList>
    </citation>
    <scope>NUCLEOTIDE SEQUENCE [LARGE SCALE GENOMIC DNA]</scope>
    <source>
        <strain>K12 / MG1655 / ATCC 47076</strain>
    </source>
</reference>
<reference key="3">
    <citation type="journal article" date="2006" name="Mol. Syst. Biol.">
        <title>Highly accurate genome sequences of Escherichia coli K-12 strains MG1655 and W3110.</title>
        <authorList>
            <person name="Hayashi K."/>
            <person name="Morooka N."/>
            <person name="Yamamoto Y."/>
            <person name="Fujita K."/>
            <person name="Isono K."/>
            <person name="Choi S."/>
            <person name="Ohtsubo E."/>
            <person name="Baba T."/>
            <person name="Wanner B.L."/>
            <person name="Mori H."/>
            <person name="Horiuchi T."/>
        </authorList>
    </citation>
    <scope>NUCLEOTIDE SEQUENCE [LARGE SCALE GENOMIC DNA]</scope>
    <source>
        <strain>K12 / W3110 / ATCC 27325 / DSM 5911</strain>
    </source>
</reference>
<gene>
    <name type="primary">ysaA</name>
    <name type="ordered locus">b3573</name>
    <name type="ordered locus">JW3545</name>
</gene>
<dbReference type="EMBL" id="U00039">
    <property type="status" value="NOT_ANNOTATED_CDS"/>
    <property type="molecule type" value="Genomic_DNA"/>
</dbReference>
<dbReference type="EMBL" id="U00096">
    <property type="protein sequence ID" value="AAC76597.1"/>
    <property type="molecule type" value="Genomic_DNA"/>
</dbReference>
<dbReference type="EMBL" id="AP009048">
    <property type="protein sequence ID" value="BAE77720.1"/>
    <property type="molecule type" value="Genomic_DNA"/>
</dbReference>
<dbReference type="PIR" id="G65156">
    <property type="entry name" value="G65156"/>
</dbReference>
<dbReference type="RefSeq" id="NP_418030.1">
    <property type="nucleotide sequence ID" value="NC_000913.3"/>
</dbReference>
<dbReference type="RefSeq" id="WP_001300918.1">
    <property type="nucleotide sequence ID" value="NZ_SSZK01000041.1"/>
</dbReference>
<dbReference type="SMR" id="P56256"/>
<dbReference type="BioGRID" id="4259372">
    <property type="interactions" value="11"/>
</dbReference>
<dbReference type="BioGRID" id="852393">
    <property type="interactions" value="1"/>
</dbReference>
<dbReference type="FunCoup" id="P56256">
    <property type="interactions" value="20"/>
</dbReference>
<dbReference type="IntAct" id="P56256">
    <property type="interactions" value="2"/>
</dbReference>
<dbReference type="STRING" id="511145.b3573"/>
<dbReference type="PaxDb" id="511145-b3573"/>
<dbReference type="EnsemblBacteria" id="AAC76597">
    <property type="protein sequence ID" value="AAC76597"/>
    <property type="gene ID" value="b3573"/>
</dbReference>
<dbReference type="GeneID" id="948085"/>
<dbReference type="KEGG" id="ecj:JW3545"/>
<dbReference type="KEGG" id="eco:b3573"/>
<dbReference type="KEGG" id="ecoc:C3026_19375"/>
<dbReference type="PATRIC" id="fig|1411691.4.peg.3139"/>
<dbReference type="EchoBASE" id="EB4065"/>
<dbReference type="eggNOG" id="COG1142">
    <property type="taxonomic scope" value="Bacteria"/>
</dbReference>
<dbReference type="HOGENOM" id="CLU_043374_3_0_6"/>
<dbReference type="InParanoid" id="P56256"/>
<dbReference type="OMA" id="ILCRLCM"/>
<dbReference type="OrthoDB" id="9779457at2"/>
<dbReference type="PhylomeDB" id="P56256"/>
<dbReference type="BioCyc" id="EcoCyc:EG12277-MONOMER"/>
<dbReference type="PRO" id="PR:P56256"/>
<dbReference type="Proteomes" id="UP000000625">
    <property type="component" value="Chromosome"/>
</dbReference>
<dbReference type="GO" id="GO:0051539">
    <property type="term" value="F:4 iron, 4 sulfur cluster binding"/>
    <property type="evidence" value="ECO:0007669"/>
    <property type="project" value="UniProtKB-KW"/>
</dbReference>
<dbReference type="GO" id="GO:0009055">
    <property type="term" value="F:electron transfer activity"/>
    <property type="evidence" value="ECO:0000315"/>
    <property type="project" value="EcoCyc"/>
</dbReference>
<dbReference type="GO" id="GO:0046872">
    <property type="term" value="F:metal ion binding"/>
    <property type="evidence" value="ECO:0007669"/>
    <property type="project" value="UniProtKB-KW"/>
</dbReference>
<dbReference type="CDD" id="cd10554">
    <property type="entry name" value="HycB_like"/>
    <property type="match status" value="1"/>
</dbReference>
<dbReference type="Gene3D" id="3.30.70.20">
    <property type="match status" value="2"/>
</dbReference>
<dbReference type="InterPro" id="IPR017896">
    <property type="entry name" value="4Fe4S_Fe-S-bd"/>
</dbReference>
<dbReference type="InterPro" id="IPR017900">
    <property type="entry name" value="4Fe4S_Fe_S_CS"/>
</dbReference>
<dbReference type="InterPro" id="IPR050294">
    <property type="entry name" value="RnfB_subfamily"/>
</dbReference>
<dbReference type="PANTHER" id="PTHR42859:SF18">
    <property type="entry name" value="ELECTRON TRANSPORT PROTEIN YSAA-RELATED"/>
    <property type="match status" value="1"/>
</dbReference>
<dbReference type="PANTHER" id="PTHR42859">
    <property type="entry name" value="OXIDOREDUCTASE"/>
    <property type="match status" value="1"/>
</dbReference>
<dbReference type="Pfam" id="PF13247">
    <property type="entry name" value="Fer4_11"/>
    <property type="match status" value="1"/>
</dbReference>
<dbReference type="Pfam" id="PF12800">
    <property type="entry name" value="Fer4_4"/>
    <property type="match status" value="1"/>
</dbReference>
<dbReference type="SUPFAM" id="SSF54862">
    <property type="entry name" value="4Fe-4S ferredoxins"/>
    <property type="match status" value="1"/>
</dbReference>
<dbReference type="PROSITE" id="PS00198">
    <property type="entry name" value="4FE4S_FER_1"/>
    <property type="match status" value="1"/>
</dbReference>
<dbReference type="PROSITE" id="PS51379">
    <property type="entry name" value="4FE4S_FER_2"/>
    <property type="match status" value="4"/>
</dbReference>
<accession>P56256</accession>
<accession>Q2M7N6</accession>
<name>YSAA_ECOLI</name>
<organism>
    <name type="scientific">Escherichia coli (strain K12)</name>
    <dbReference type="NCBI Taxonomy" id="83333"/>
    <lineage>
        <taxon>Bacteria</taxon>
        <taxon>Pseudomonadati</taxon>
        <taxon>Pseudomonadota</taxon>
        <taxon>Gammaproteobacteria</taxon>
        <taxon>Enterobacterales</taxon>
        <taxon>Enterobacteriaceae</taxon>
        <taxon>Escherichia</taxon>
    </lineage>
</organism>
<evidence type="ECO:0000250" key="1"/>
<evidence type="ECO:0000255" key="2">
    <source>
        <dbReference type="PROSITE-ProRule" id="PRU00711"/>
    </source>
</evidence>
<feature type="chain" id="PRO_0000159306" description="Putative electron transport protein YsaA">
    <location>
        <begin position="1"/>
        <end position="157"/>
    </location>
</feature>
<feature type="domain" description="4Fe-4S ferredoxin-type 1" evidence="2">
    <location>
        <begin position="2"/>
        <end position="32"/>
    </location>
</feature>
<feature type="domain" description="4Fe-4S ferredoxin-type 2" evidence="2">
    <location>
        <begin position="48"/>
        <end position="80"/>
    </location>
</feature>
<feature type="domain" description="4Fe-4S ferredoxin-type 3" evidence="2">
    <location>
        <begin position="80"/>
        <end position="109"/>
    </location>
</feature>
<feature type="domain" description="4Fe-4S ferredoxin-type 4" evidence="2">
    <location>
        <begin position="112"/>
        <end position="144"/>
    </location>
</feature>
<feature type="binding site" evidence="1">
    <location>
        <position position="12"/>
    </location>
    <ligand>
        <name>[4Fe-4S] cluster</name>
        <dbReference type="ChEBI" id="CHEBI:49883"/>
        <label>1</label>
    </ligand>
</feature>
<feature type="binding site" evidence="1">
    <location>
        <position position="15"/>
    </location>
    <ligand>
        <name>[4Fe-4S] cluster</name>
        <dbReference type="ChEBI" id="CHEBI:49883"/>
        <label>1</label>
    </ligand>
</feature>
<feature type="binding site" evidence="1">
    <location>
        <position position="18"/>
    </location>
    <ligand>
        <name>[4Fe-4S] cluster</name>
        <dbReference type="ChEBI" id="CHEBI:49883"/>
        <label>1</label>
    </ligand>
</feature>
<feature type="binding site" evidence="1">
    <location>
        <position position="22"/>
    </location>
    <ligand>
        <name>[4Fe-4S] cluster</name>
        <dbReference type="ChEBI" id="CHEBI:49883"/>
        <label>2</label>
    </ligand>
</feature>
<feature type="binding site" evidence="1">
    <location>
        <position position="58"/>
    </location>
    <ligand>
        <name>[4Fe-4S] cluster</name>
        <dbReference type="ChEBI" id="CHEBI:49883"/>
        <label>3</label>
    </ligand>
</feature>
<feature type="binding site" evidence="1">
    <location>
        <position position="61"/>
    </location>
    <ligand>
        <name>[4Fe-4S] cluster</name>
        <dbReference type="ChEBI" id="CHEBI:49883"/>
        <label>3</label>
    </ligand>
</feature>
<feature type="binding site" evidence="1">
    <location>
        <position position="66"/>
    </location>
    <ligand>
        <name>[4Fe-4S] cluster</name>
        <dbReference type="ChEBI" id="CHEBI:49883"/>
        <label>3</label>
    </ligand>
</feature>
<feature type="binding site" evidence="1">
    <location>
        <position position="70"/>
    </location>
    <ligand>
        <name>[4Fe-4S] cluster</name>
        <dbReference type="ChEBI" id="CHEBI:49883"/>
        <label>4</label>
    </ligand>
</feature>
<feature type="binding site" evidence="1">
    <location>
        <position position="89"/>
    </location>
    <ligand>
        <name>[4Fe-4S] cluster</name>
        <dbReference type="ChEBI" id="CHEBI:49883"/>
        <label>4</label>
    </ligand>
</feature>
<feature type="binding site" evidence="1">
    <location>
        <position position="92"/>
    </location>
    <ligand>
        <name>[4Fe-4S] cluster</name>
        <dbReference type="ChEBI" id="CHEBI:49883"/>
        <label>4</label>
    </ligand>
</feature>
<feature type="binding site" evidence="1">
    <location>
        <position position="95"/>
    </location>
    <ligand>
        <name>[4Fe-4S] cluster</name>
        <dbReference type="ChEBI" id="CHEBI:49883"/>
        <label>4</label>
    </ligand>
</feature>
<feature type="binding site" evidence="1">
    <location>
        <position position="99"/>
    </location>
    <ligand>
        <name>[4Fe-4S] cluster</name>
        <dbReference type="ChEBI" id="CHEBI:49883"/>
        <label>3</label>
    </ligand>
</feature>
<feature type="binding site" evidence="1">
    <location>
        <position position="118"/>
    </location>
    <ligand>
        <name>[4Fe-4S] cluster</name>
        <dbReference type="ChEBI" id="CHEBI:49883"/>
        <label>2</label>
    </ligand>
</feature>
<feature type="binding site" evidence="1">
    <location>
        <position position="121"/>
    </location>
    <ligand>
        <name>[4Fe-4S] cluster</name>
        <dbReference type="ChEBI" id="CHEBI:49883"/>
        <label>2</label>
    </ligand>
</feature>
<feature type="binding site" evidence="1">
    <location>
        <position position="130"/>
    </location>
    <ligand>
        <name>[4Fe-4S] cluster</name>
        <dbReference type="ChEBI" id="CHEBI:49883"/>
        <label>2</label>
    </ligand>
</feature>
<feature type="binding site" evidence="1">
    <location>
        <position position="134"/>
    </location>
    <ligand>
        <name>[4Fe-4S] cluster</name>
        <dbReference type="ChEBI" id="CHEBI:49883"/>
        <label>1</label>
    </ligand>
</feature>
<sequence length="157" mass="17459">MNRFIIADATKCIGCRTCEVACAVSHHENQDCAALSPDEFISRIRVIKDHCWTTAVACHQCEDAPCANVCPVDAISREHGHIFVEQTRCIGCKSCMLACPFGAMEVVSSRKKARAIKCDLCWHRETGPACVEACPTKALQCMDVEKVQRHRLRQQPV</sequence>
<protein>
    <recommendedName>
        <fullName>Putative electron transport protein YsaA</fullName>
    </recommendedName>
</protein>
<keyword id="KW-0004">4Fe-4S</keyword>
<keyword id="KW-0249">Electron transport</keyword>
<keyword id="KW-0408">Iron</keyword>
<keyword id="KW-0411">Iron-sulfur</keyword>
<keyword id="KW-0479">Metal-binding</keyword>
<keyword id="KW-1185">Reference proteome</keyword>
<keyword id="KW-0677">Repeat</keyword>
<keyword id="KW-0813">Transport</keyword>